<name>YISJ_BACSU</name>
<dbReference type="EMBL" id="Y09476">
    <property type="protein sequence ID" value="CAA70681.1"/>
    <property type="molecule type" value="Genomic_DNA"/>
</dbReference>
<dbReference type="EMBL" id="AL009126">
    <property type="protein sequence ID" value="CAB12914.1"/>
    <property type="molecule type" value="Genomic_DNA"/>
</dbReference>
<dbReference type="PIR" id="B69837">
    <property type="entry name" value="B69837"/>
</dbReference>
<dbReference type="RefSeq" id="NP_388955.1">
    <property type="nucleotide sequence ID" value="NC_000964.3"/>
</dbReference>
<dbReference type="RefSeq" id="WP_003245291.1">
    <property type="nucleotide sequence ID" value="NZ_OZ025638.1"/>
</dbReference>
<dbReference type="SMR" id="O06723"/>
<dbReference type="FunCoup" id="O06723">
    <property type="interactions" value="3"/>
</dbReference>
<dbReference type="STRING" id="224308.BSU10740"/>
<dbReference type="PaxDb" id="224308-BSU10740"/>
<dbReference type="EnsemblBacteria" id="CAB12914">
    <property type="protein sequence ID" value="CAB12914"/>
    <property type="gene ID" value="BSU_10740"/>
</dbReference>
<dbReference type="GeneID" id="939786"/>
<dbReference type="KEGG" id="bsu:BSU10740"/>
<dbReference type="PATRIC" id="fig|224308.179.peg.1155"/>
<dbReference type="eggNOG" id="COG5337">
    <property type="taxonomic scope" value="Bacteria"/>
</dbReference>
<dbReference type="InParanoid" id="O06723"/>
<dbReference type="OrthoDB" id="3235126at2"/>
<dbReference type="PhylomeDB" id="O06723"/>
<dbReference type="BioCyc" id="BSUB:BSU10740-MONOMER"/>
<dbReference type="Proteomes" id="UP000001570">
    <property type="component" value="Chromosome"/>
</dbReference>
<dbReference type="GO" id="GO:0030435">
    <property type="term" value="P:sporulation resulting in formation of a cellular spore"/>
    <property type="evidence" value="ECO:0007669"/>
    <property type="project" value="UniProtKB-KW"/>
</dbReference>
<dbReference type="InterPro" id="IPR014867">
    <property type="entry name" value="Spore_coat_CotH_CotH2/3/7"/>
</dbReference>
<dbReference type="PANTHER" id="PTHR40050">
    <property type="entry name" value="INNER SPORE COAT PROTEIN H"/>
    <property type="match status" value="1"/>
</dbReference>
<dbReference type="PANTHER" id="PTHR40050:SF1">
    <property type="entry name" value="INNER SPORE COAT PROTEIN H"/>
    <property type="match status" value="1"/>
</dbReference>
<dbReference type="Pfam" id="PF08757">
    <property type="entry name" value="CotH"/>
    <property type="match status" value="2"/>
</dbReference>
<proteinExistence type="inferred from homology"/>
<accession>O06723</accession>
<accession>Q796R2</accession>
<comment type="function">
    <text evidence="1">Involved in the assembly of several proteins in the inner and outer layer of the spore coat.</text>
</comment>
<comment type="subcellular location">
    <subcellularLocation>
        <location evidence="1">Spore coat</location>
    </subcellularLocation>
</comment>
<comment type="similarity">
    <text evidence="2">Belongs to the CotH family.</text>
</comment>
<sequence>MERVHLFFHREQLKRKGTAKGLFVTDRSVSPILLTQRDRAEKASYEISWEKSLLGERTLFLNAEQDDPSLMRRRLAYCFFDQIGVPAPVASYSFLTINGQPEGIYLNIKNHQPAGKRSYGVKTADPRVPLSLFNNDSSAFLHEFFILIRTAGDDELAERIKLYLDVKLFFLWLIGNTCTNQGFYYTFCLNESGRLYVSPMETRSLAVQEWYEEDPLLTKGKTLSSRLLSIPAFRSQYHTLMKNVLKRSFTIERLSPLINEWHLDICQSAADDPFIKKSPFQIEKEQTNILREIEERQDFLQAHLARL</sequence>
<protein>
    <recommendedName>
        <fullName>Inner spore coat protein H-like protein</fullName>
    </recommendedName>
</protein>
<evidence type="ECO:0000250" key="1"/>
<evidence type="ECO:0000305" key="2"/>
<keyword id="KW-1185">Reference proteome</keyword>
<keyword id="KW-0749">Sporulation</keyword>
<reference key="1">
    <citation type="journal article" date="1997" name="Microbiology">
        <title>Sequencing of regions downstream of addA (98 degrees) and citG (289 degrees) in Bacillus subtilis.</title>
        <authorList>
            <person name="Medina N."/>
            <person name="Vannier F."/>
            <person name="Roche B."/>
            <person name="Autret S."/>
            <person name="Levine A."/>
            <person name="Seror S.J."/>
        </authorList>
    </citation>
    <scope>NUCLEOTIDE SEQUENCE [GENOMIC DNA]</scope>
    <source>
        <strain>168</strain>
    </source>
</reference>
<reference key="2">
    <citation type="journal article" date="1997" name="Nature">
        <title>The complete genome sequence of the Gram-positive bacterium Bacillus subtilis.</title>
        <authorList>
            <person name="Kunst F."/>
            <person name="Ogasawara N."/>
            <person name="Moszer I."/>
            <person name="Albertini A.M."/>
            <person name="Alloni G."/>
            <person name="Azevedo V."/>
            <person name="Bertero M.G."/>
            <person name="Bessieres P."/>
            <person name="Bolotin A."/>
            <person name="Borchert S."/>
            <person name="Borriss R."/>
            <person name="Boursier L."/>
            <person name="Brans A."/>
            <person name="Braun M."/>
            <person name="Brignell S.C."/>
            <person name="Bron S."/>
            <person name="Brouillet S."/>
            <person name="Bruschi C.V."/>
            <person name="Caldwell B."/>
            <person name="Capuano V."/>
            <person name="Carter N.M."/>
            <person name="Choi S.-K."/>
            <person name="Codani J.-J."/>
            <person name="Connerton I.F."/>
            <person name="Cummings N.J."/>
            <person name="Daniel R.A."/>
            <person name="Denizot F."/>
            <person name="Devine K.M."/>
            <person name="Duesterhoeft A."/>
            <person name="Ehrlich S.D."/>
            <person name="Emmerson P.T."/>
            <person name="Entian K.-D."/>
            <person name="Errington J."/>
            <person name="Fabret C."/>
            <person name="Ferrari E."/>
            <person name="Foulger D."/>
            <person name="Fritz C."/>
            <person name="Fujita M."/>
            <person name="Fujita Y."/>
            <person name="Fuma S."/>
            <person name="Galizzi A."/>
            <person name="Galleron N."/>
            <person name="Ghim S.-Y."/>
            <person name="Glaser P."/>
            <person name="Goffeau A."/>
            <person name="Golightly E.J."/>
            <person name="Grandi G."/>
            <person name="Guiseppi G."/>
            <person name="Guy B.J."/>
            <person name="Haga K."/>
            <person name="Haiech J."/>
            <person name="Harwood C.R."/>
            <person name="Henaut A."/>
            <person name="Hilbert H."/>
            <person name="Holsappel S."/>
            <person name="Hosono S."/>
            <person name="Hullo M.-F."/>
            <person name="Itaya M."/>
            <person name="Jones L.-M."/>
            <person name="Joris B."/>
            <person name="Karamata D."/>
            <person name="Kasahara Y."/>
            <person name="Klaerr-Blanchard M."/>
            <person name="Klein C."/>
            <person name="Kobayashi Y."/>
            <person name="Koetter P."/>
            <person name="Koningstein G."/>
            <person name="Krogh S."/>
            <person name="Kumano M."/>
            <person name="Kurita K."/>
            <person name="Lapidus A."/>
            <person name="Lardinois S."/>
            <person name="Lauber J."/>
            <person name="Lazarevic V."/>
            <person name="Lee S.-M."/>
            <person name="Levine A."/>
            <person name="Liu H."/>
            <person name="Masuda S."/>
            <person name="Mauel C."/>
            <person name="Medigue C."/>
            <person name="Medina N."/>
            <person name="Mellado R.P."/>
            <person name="Mizuno M."/>
            <person name="Moestl D."/>
            <person name="Nakai S."/>
            <person name="Noback M."/>
            <person name="Noone D."/>
            <person name="O'Reilly M."/>
            <person name="Ogawa K."/>
            <person name="Ogiwara A."/>
            <person name="Oudega B."/>
            <person name="Park S.-H."/>
            <person name="Parro V."/>
            <person name="Pohl T.M."/>
            <person name="Portetelle D."/>
            <person name="Porwollik S."/>
            <person name="Prescott A.M."/>
            <person name="Presecan E."/>
            <person name="Pujic P."/>
            <person name="Purnelle B."/>
            <person name="Rapoport G."/>
            <person name="Rey M."/>
            <person name="Reynolds S."/>
            <person name="Rieger M."/>
            <person name="Rivolta C."/>
            <person name="Rocha E."/>
            <person name="Roche B."/>
            <person name="Rose M."/>
            <person name="Sadaie Y."/>
            <person name="Sato T."/>
            <person name="Scanlan E."/>
            <person name="Schleich S."/>
            <person name="Schroeter R."/>
            <person name="Scoffone F."/>
            <person name="Sekiguchi J."/>
            <person name="Sekowska A."/>
            <person name="Seror S.J."/>
            <person name="Serror P."/>
            <person name="Shin B.-S."/>
            <person name="Soldo B."/>
            <person name="Sorokin A."/>
            <person name="Tacconi E."/>
            <person name="Takagi T."/>
            <person name="Takahashi H."/>
            <person name="Takemaru K."/>
            <person name="Takeuchi M."/>
            <person name="Tamakoshi A."/>
            <person name="Tanaka T."/>
            <person name="Terpstra P."/>
            <person name="Tognoni A."/>
            <person name="Tosato V."/>
            <person name="Uchiyama S."/>
            <person name="Vandenbol M."/>
            <person name="Vannier F."/>
            <person name="Vassarotti A."/>
            <person name="Viari A."/>
            <person name="Wambutt R."/>
            <person name="Wedler E."/>
            <person name="Wedler H."/>
            <person name="Weitzenegger T."/>
            <person name="Winters P."/>
            <person name="Wipat A."/>
            <person name="Yamamoto H."/>
            <person name="Yamane K."/>
            <person name="Yasumoto K."/>
            <person name="Yata K."/>
            <person name="Yoshida K."/>
            <person name="Yoshikawa H.-F."/>
            <person name="Zumstein E."/>
            <person name="Yoshikawa H."/>
            <person name="Danchin A."/>
        </authorList>
    </citation>
    <scope>NUCLEOTIDE SEQUENCE [LARGE SCALE GENOMIC DNA]</scope>
    <source>
        <strain>168</strain>
    </source>
</reference>
<feature type="chain" id="PRO_0000360575" description="Inner spore coat protein H-like protein">
    <location>
        <begin position="1"/>
        <end position="307"/>
    </location>
</feature>
<organism>
    <name type="scientific">Bacillus subtilis (strain 168)</name>
    <dbReference type="NCBI Taxonomy" id="224308"/>
    <lineage>
        <taxon>Bacteria</taxon>
        <taxon>Bacillati</taxon>
        <taxon>Bacillota</taxon>
        <taxon>Bacilli</taxon>
        <taxon>Bacillales</taxon>
        <taxon>Bacillaceae</taxon>
        <taxon>Bacillus</taxon>
    </lineage>
</organism>
<gene>
    <name type="primary">yisJ</name>
    <name type="ordered locus">BSU10740</name>
</gene>